<accession>P0AC65</accession>
<accession>Q2MAC4</accession>
<accession>Q47414</accession>
<keyword id="KW-0002">3D-structure</keyword>
<keyword id="KW-1015">Disulfide bond</keyword>
<keyword id="KW-0249">Electron transport</keyword>
<keyword id="KW-0676">Redox-active center</keyword>
<keyword id="KW-1185">Reference proteome</keyword>
<keyword id="KW-0813">Transport</keyword>
<gene>
    <name type="primary">nrdH</name>
    <name type="synonym">ygaN</name>
    <name type="ordered locus">b2673</name>
    <name type="ordered locus">JW2648</name>
</gene>
<evidence type="ECO:0000255" key="1">
    <source>
        <dbReference type="PROSITE-ProRule" id="PRU00686"/>
    </source>
</evidence>
<evidence type="ECO:0000269" key="2">
    <source>
    </source>
</evidence>
<evidence type="ECO:0000305" key="3"/>
<evidence type="ECO:0007829" key="4">
    <source>
        <dbReference type="PDB" id="1H75"/>
    </source>
</evidence>
<proteinExistence type="evidence at protein level"/>
<feature type="chain" id="PRO_0000141638" description="Glutaredoxin-like protein NrdH">
    <location>
        <begin position="1"/>
        <end position="81"/>
    </location>
</feature>
<feature type="domain" description="Glutaredoxin" evidence="1">
    <location>
        <begin position="1"/>
        <end position="81"/>
    </location>
</feature>
<feature type="disulfide bond" description="Redox-active">
    <location>
        <begin position="11"/>
        <end position="14"/>
    </location>
</feature>
<feature type="strand" evidence="4">
    <location>
        <begin position="3"/>
        <end position="7"/>
    </location>
</feature>
<feature type="helix" evidence="4">
    <location>
        <begin position="12"/>
        <end position="23"/>
    </location>
</feature>
<feature type="strand" evidence="4">
    <location>
        <begin position="29"/>
        <end position="32"/>
    </location>
</feature>
<feature type="turn" evidence="4">
    <location>
        <begin position="33"/>
        <end position="35"/>
    </location>
</feature>
<feature type="helix" evidence="4">
    <location>
        <begin position="37"/>
        <end position="45"/>
    </location>
</feature>
<feature type="strand" evidence="4">
    <location>
        <begin position="53"/>
        <end position="56"/>
    </location>
</feature>
<feature type="strand" evidence="4">
    <location>
        <begin position="59"/>
        <end position="63"/>
    </location>
</feature>
<feature type="helix" evidence="4">
    <location>
        <begin position="66"/>
        <end position="69"/>
    </location>
</feature>
<feature type="helix" evidence="4">
    <location>
        <begin position="70"/>
        <end position="72"/>
    </location>
</feature>
<protein>
    <recommendedName>
        <fullName>Glutaredoxin-like protein NrdH</fullName>
    </recommendedName>
</protein>
<comment type="function">
    <text>Electron transport system for the ribonucleotide reductase system NrdEF.</text>
</comment>
<comment type="induction">
    <text evidence="2">Induced 2-fold by hydroxyurea.</text>
</comment>
<comment type="similarity">
    <text evidence="3">Belongs to the glutaredoxin family.</text>
</comment>
<dbReference type="EMBL" id="X79787">
    <property type="protein sequence ID" value="CAA56184.1"/>
    <property type="molecule type" value="Genomic_DNA"/>
</dbReference>
<dbReference type="EMBL" id="U00096">
    <property type="protein sequence ID" value="AAC75720.1"/>
    <property type="molecule type" value="Genomic_DNA"/>
</dbReference>
<dbReference type="EMBL" id="AP009048">
    <property type="protein sequence ID" value="BAE76782.1"/>
    <property type="molecule type" value="Genomic_DNA"/>
</dbReference>
<dbReference type="PIR" id="S70891">
    <property type="entry name" value="S70891"/>
</dbReference>
<dbReference type="RefSeq" id="NP_417159.1">
    <property type="nucleotide sequence ID" value="NC_000913.3"/>
</dbReference>
<dbReference type="RefSeq" id="WP_001223227.1">
    <property type="nucleotide sequence ID" value="NZ_STEB01000042.1"/>
</dbReference>
<dbReference type="PDB" id="1H75">
    <property type="method" value="X-ray"/>
    <property type="resolution" value="1.70 A"/>
    <property type="chains" value="A=1-81"/>
</dbReference>
<dbReference type="PDBsum" id="1H75"/>
<dbReference type="SMR" id="P0AC65"/>
<dbReference type="BioGRID" id="4260693">
    <property type="interactions" value="18"/>
</dbReference>
<dbReference type="BioGRID" id="851493">
    <property type="interactions" value="2"/>
</dbReference>
<dbReference type="DIP" id="DIP-48164N"/>
<dbReference type="FunCoup" id="P0AC65">
    <property type="interactions" value="16"/>
</dbReference>
<dbReference type="IntAct" id="P0AC65">
    <property type="interactions" value="7"/>
</dbReference>
<dbReference type="STRING" id="511145.b2673"/>
<dbReference type="PaxDb" id="511145-b2673"/>
<dbReference type="EnsemblBacteria" id="AAC75720">
    <property type="protein sequence ID" value="AAC75720"/>
    <property type="gene ID" value="b2673"/>
</dbReference>
<dbReference type="GeneID" id="93779337"/>
<dbReference type="GeneID" id="947161"/>
<dbReference type="KEGG" id="ecj:JW2648"/>
<dbReference type="KEGG" id="eco:b2673"/>
<dbReference type="KEGG" id="ecoc:C3026_14730"/>
<dbReference type="PATRIC" id="fig|1411691.4.peg.4068"/>
<dbReference type="EchoBASE" id="EB3071"/>
<dbReference type="eggNOG" id="COG0695">
    <property type="taxonomic scope" value="Bacteria"/>
</dbReference>
<dbReference type="HOGENOM" id="CLU_026126_9_0_6"/>
<dbReference type="InParanoid" id="P0AC65"/>
<dbReference type="OMA" id="HWSGYRP"/>
<dbReference type="OrthoDB" id="8545217at2"/>
<dbReference type="PhylomeDB" id="P0AC65"/>
<dbReference type="BioCyc" id="EcoCyc:G7401-MONOMER"/>
<dbReference type="EvolutionaryTrace" id="P0AC65"/>
<dbReference type="PRO" id="PR:P0AC65"/>
<dbReference type="Proteomes" id="UP000000625">
    <property type="component" value="Chromosome"/>
</dbReference>
<dbReference type="GO" id="GO:0009055">
    <property type="term" value="F:electron transfer activity"/>
    <property type="evidence" value="ECO:0000314"/>
    <property type="project" value="EcoCyc"/>
</dbReference>
<dbReference type="GO" id="GO:0045454">
    <property type="term" value="P:cell redox homeostasis"/>
    <property type="evidence" value="ECO:0000314"/>
    <property type="project" value="EcoCyc"/>
</dbReference>
<dbReference type="CDD" id="cd02976">
    <property type="entry name" value="NrdH"/>
    <property type="match status" value="1"/>
</dbReference>
<dbReference type="FunFam" id="3.40.30.10:FF:000060">
    <property type="entry name" value="Glutaredoxin-like protein nrdH"/>
    <property type="match status" value="1"/>
</dbReference>
<dbReference type="Gene3D" id="3.40.30.10">
    <property type="entry name" value="Glutaredoxin"/>
    <property type="match status" value="1"/>
</dbReference>
<dbReference type="InterPro" id="IPR011909">
    <property type="entry name" value="GlrX_NrdH"/>
</dbReference>
<dbReference type="InterPro" id="IPR002109">
    <property type="entry name" value="Glutaredoxin"/>
</dbReference>
<dbReference type="InterPro" id="IPR051548">
    <property type="entry name" value="Grx-like_ET"/>
</dbReference>
<dbReference type="InterPro" id="IPR036249">
    <property type="entry name" value="Thioredoxin-like_sf"/>
</dbReference>
<dbReference type="NCBIfam" id="TIGR02194">
    <property type="entry name" value="GlrX_NrdH"/>
    <property type="match status" value="1"/>
</dbReference>
<dbReference type="NCBIfam" id="NF007657">
    <property type="entry name" value="PRK10329.1"/>
    <property type="match status" value="1"/>
</dbReference>
<dbReference type="PANTHER" id="PTHR34386">
    <property type="entry name" value="GLUTAREDOXIN"/>
    <property type="match status" value="1"/>
</dbReference>
<dbReference type="PANTHER" id="PTHR34386:SF1">
    <property type="entry name" value="GLUTAREDOXIN-LIKE PROTEIN NRDH"/>
    <property type="match status" value="1"/>
</dbReference>
<dbReference type="Pfam" id="PF00462">
    <property type="entry name" value="Glutaredoxin"/>
    <property type="match status" value="1"/>
</dbReference>
<dbReference type="SUPFAM" id="SSF52833">
    <property type="entry name" value="Thioredoxin-like"/>
    <property type="match status" value="1"/>
</dbReference>
<dbReference type="PROSITE" id="PS51354">
    <property type="entry name" value="GLUTAREDOXIN_2"/>
    <property type="match status" value="1"/>
</dbReference>
<sequence>MRITIYTRNDCVQCHATKRAMENRGFDFEMINVDRVPEAAEALRAQGFRQLPVVIAGDLSWSGFRPDMINRLHPAPHAASA</sequence>
<organism>
    <name type="scientific">Escherichia coli (strain K12)</name>
    <dbReference type="NCBI Taxonomy" id="83333"/>
    <lineage>
        <taxon>Bacteria</taxon>
        <taxon>Pseudomonadati</taxon>
        <taxon>Pseudomonadota</taxon>
        <taxon>Gammaproteobacteria</taxon>
        <taxon>Enterobacterales</taxon>
        <taxon>Enterobacteriaceae</taxon>
        <taxon>Escherichia</taxon>
    </lineage>
</organism>
<name>NRDH_ECOLI</name>
<reference key="1">
    <citation type="journal article" date="1996" name="Mol. Microbiol.">
        <title>Promoter identification and expression analysis of Salmonella typhimurium and Escherichia coli nrdEF operons encoding one of two class I ribonucleotide reductases present in both bacteria.</title>
        <authorList>
            <person name="Jordan A."/>
            <person name="Aragall E."/>
            <person name="Gibert I."/>
            <person name="Barbe J."/>
        </authorList>
    </citation>
    <scope>NUCLEOTIDE SEQUENCE [GENOMIC DNA]</scope>
    <source>
        <strain>K12</strain>
    </source>
</reference>
<reference key="2">
    <citation type="journal article" date="1997" name="Science">
        <title>The complete genome sequence of Escherichia coli K-12.</title>
        <authorList>
            <person name="Blattner F.R."/>
            <person name="Plunkett G. III"/>
            <person name="Bloch C.A."/>
            <person name="Perna N.T."/>
            <person name="Burland V."/>
            <person name="Riley M."/>
            <person name="Collado-Vides J."/>
            <person name="Glasner J.D."/>
            <person name="Rode C.K."/>
            <person name="Mayhew G.F."/>
            <person name="Gregor J."/>
            <person name="Davis N.W."/>
            <person name="Kirkpatrick H.A."/>
            <person name="Goeden M.A."/>
            <person name="Rose D.J."/>
            <person name="Mau B."/>
            <person name="Shao Y."/>
        </authorList>
    </citation>
    <scope>NUCLEOTIDE SEQUENCE [LARGE SCALE GENOMIC DNA]</scope>
    <source>
        <strain>K12 / MG1655 / ATCC 47076</strain>
    </source>
</reference>
<reference key="3">
    <citation type="journal article" date="2006" name="Mol. Syst. Biol.">
        <title>Highly accurate genome sequences of Escherichia coli K-12 strains MG1655 and W3110.</title>
        <authorList>
            <person name="Hayashi K."/>
            <person name="Morooka N."/>
            <person name="Yamamoto Y."/>
            <person name="Fujita K."/>
            <person name="Isono K."/>
            <person name="Choi S."/>
            <person name="Ohtsubo E."/>
            <person name="Baba T."/>
            <person name="Wanner B.L."/>
            <person name="Mori H."/>
            <person name="Horiuchi T."/>
        </authorList>
    </citation>
    <scope>NUCLEOTIDE SEQUENCE [LARGE SCALE GENOMIC DNA]</scope>
    <source>
        <strain>K12 / W3110 / ATCC 27325 / DSM 5911</strain>
    </source>
</reference>
<reference key="4">
    <citation type="journal article" date="2009" name="Mol. Cell">
        <title>Hydroxyurea induces hydroxyl radical-mediated cell death in Escherichia coli.</title>
        <authorList>
            <person name="Davies B.W."/>
            <person name="Kohanski M.A."/>
            <person name="Simmons L.A."/>
            <person name="Winkler J.A."/>
            <person name="Collins J.J."/>
            <person name="Walker G.C."/>
        </authorList>
    </citation>
    <scope>INDUCTION BY HYDROXYUREA</scope>
    <source>
        <strain>K12 / MC4100 / ATCC 35695 / DSM 6574</strain>
    </source>
</reference>
<reference key="5">
    <citation type="journal article" date="2001" name="J. Biol. Chem.">
        <title>Structural basis for the thioredoxin-like activity profile of the glutaredoxin-like NrdH-redoxin from Escherichia coli.</title>
        <authorList>
            <person name="Stehr M."/>
            <person name="Schneider G."/>
            <person name="Aslund F."/>
            <person name="Holmgren A."/>
            <person name="Lindqvist Y."/>
        </authorList>
    </citation>
    <scope>X-RAY CRYSTALLOGRAPHY (1.7 ANGSTROMS)</scope>
</reference>